<evidence type="ECO:0000250" key="1">
    <source>
        <dbReference type="UniProtKB" id="Q4KMQ2"/>
    </source>
</evidence>
<evidence type="ECO:0000255" key="2"/>
<evidence type="ECO:0000269" key="3">
    <source>
    </source>
</evidence>
<evidence type="ECO:0000269" key="4">
    <source>
    </source>
</evidence>
<evidence type="ECO:0000269" key="5">
    <source>
    </source>
</evidence>
<evidence type="ECO:0000269" key="6">
    <source>
    </source>
</evidence>
<evidence type="ECO:0000269" key="7">
    <source>
    </source>
</evidence>
<evidence type="ECO:0000269" key="8">
    <source>
    </source>
</evidence>
<evidence type="ECO:0000269" key="9">
    <source>
    </source>
</evidence>
<evidence type="ECO:0000269" key="10">
    <source>
    </source>
</evidence>
<evidence type="ECO:0000269" key="11">
    <source>
    </source>
</evidence>
<evidence type="ECO:0000269" key="12">
    <source>
    </source>
</evidence>
<evidence type="ECO:0000269" key="13">
    <source>
    </source>
</evidence>
<evidence type="ECO:0000303" key="14">
    <source>
    </source>
</evidence>
<evidence type="ECO:0000303" key="15">
    <source>
    </source>
</evidence>
<evidence type="ECO:0000303" key="16">
    <source>
    </source>
</evidence>
<evidence type="ECO:0000305" key="17"/>
<evidence type="ECO:0000305" key="18">
    <source>
    </source>
</evidence>
<evidence type="ECO:0007744" key="19">
    <source>
        <dbReference type="PDB" id="6QP6"/>
    </source>
</evidence>
<evidence type="ECO:0007744" key="20">
    <source>
        <dbReference type="PDB" id="6QPB"/>
    </source>
</evidence>
<evidence type="ECO:0007744" key="21">
    <source>
        <dbReference type="PDB" id="6QPC"/>
    </source>
</evidence>
<evidence type="ECO:0007744" key="22">
    <source>
        <dbReference type="PDB" id="6QPI"/>
    </source>
</evidence>
<evidence type="ECO:0007829" key="23">
    <source>
        <dbReference type="PDB" id="6P46"/>
    </source>
</evidence>
<evidence type="ECO:0007829" key="24">
    <source>
        <dbReference type="PDB" id="6P48"/>
    </source>
</evidence>
<evidence type="ECO:0007829" key="25">
    <source>
        <dbReference type="PDB" id="6P49"/>
    </source>
</evidence>
<evidence type="ECO:0007829" key="26">
    <source>
        <dbReference type="PDB" id="6QPI"/>
    </source>
</evidence>
<evidence type="ECO:0007829" key="27">
    <source>
        <dbReference type="PDB" id="8B8G"/>
    </source>
</evidence>
<evidence type="ECO:0007829" key="28">
    <source>
        <dbReference type="PDB" id="8B8J"/>
    </source>
</evidence>
<evidence type="ECO:0007829" key="29">
    <source>
        <dbReference type="PDB" id="8B8K"/>
    </source>
</evidence>
<evidence type="ECO:0007829" key="30">
    <source>
        <dbReference type="PDB" id="8B8Q"/>
    </source>
</evidence>
<evidence type="ECO:0007829" key="31">
    <source>
        <dbReference type="PDB" id="8BC0"/>
    </source>
</evidence>
<evidence type="ECO:0007829" key="32">
    <source>
        <dbReference type="PDB" id="8BC1"/>
    </source>
</evidence>
<evidence type="ECO:0007829" key="33">
    <source>
        <dbReference type="PDB" id="8SUR"/>
    </source>
</evidence>
<evidence type="ECO:0007829" key="34">
    <source>
        <dbReference type="PDB" id="8TAG"/>
    </source>
</evidence>
<evidence type="ECO:0007829" key="35">
    <source>
        <dbReference type="PDB" id="8TAI"/>
    </source>
</evidence>
<reference key="1">
    <citation type="journal article" date="2005" name="Science">
        <title>The transcriptional landscape of the mammalian genome.</title>
        <authorList>
            <person name="Carninci P."/>
            <person name="Kasukawa T."/>
            <person name="Katayama S."/>
            <person name="Gough J."/>
            <person name="Frith M.C."/>
            <person name="Maeda N."/>
            <person name="Oyama R."/>
            <person name="Ravasi T."/>
            <person name="Lenhard B."/>
            <person name="Wells C."/>
            <person name="Kodzius R."/>
            <person name="Shimokawa K."/>
            <person name="Bajic V.B."/>
            <person name="Brenner S.E."/>
            <person name="Batalov S."/>
            <person name="Forrest A.R."/>
            <person name="Zavolan M."/>
            <person name="Davis M.J."/>
            <person name="Wilming L.G."/>
            <person name="Aidinis V."/>
            <person name="Allen J.E."/>
            <person name="Ambesi-Impiombato A."/>
            <person name="Apweiler R."/>
            <person name="Aturaliya R.N."/>
            <person name="Bailey T.L."/>
            <person name="Bansal M."/>
            <person name="Baxter L."/>
            <person name="Beisel K.W."/>
            <person name="Bersano T."/>
            <person name="Bono H."/>
            <person name="Chalk A.M."/>
            <person name="Chiu K.P."/>
            <person name="Choudhary V."/>
            <person name="Christoffels A."/>
            <person name="Clutterbuck D.R."/>
            <person name="Crowe M.L."/>
            <person name="Dalla E."/>
            <person name="Dalrymple B.P."/>
            <person name="de Bono B."/>
            <person name="Della Gatta G."/>
            <person name="di Bernardo D."/>
            <person name="Down T."/>
            <person name="Engstrom P."/>
            <person name="Fagiolini M."/>
            <person name="Faulkner G."/>
            <person name="Fletcher C.F."/>
            <person name="Fukushima T."/>
            <person name="Furuno M."/>
            <person name="Futaki S."/>
            <person name="Gariboldi M."/>
            <person name="Georgii-Hemming P."/>
            <person name="Gingeras T.R."/>
            <person name="Gojobori T."/>
            <person name="Green R.E."/>
            <person name="Gustincich S."/>
            <person name="Harbers M."/>
            <person name="Hayashi Y."/>
            <person name="Hensch T.K."/>
            <person name="Hirokawa N."/>
            <person name="Hill D."/>
            <person name="Huminiecki L."/>
            <person name="Iacono M."/>
            <person name="Ikeo K."/>
            <person name="Iwama A."/>
            <person name="Ishikawa T."/>
            <person name="Jakt M."/>
            <person name="Kanapin A."/>
            <person name="Katoh M."/>
            <person name="Kawasawa Y."/>
            <person name="Kelso J."/>
            <person name="Kitamura H."/>
            <person name="Kitano H."/>
            <person name="Kollias G."/>
            <person name="Krishnan S.P."/>
            <person name="Kruger A."/>
            <person name="Kummerfeld S.K."/>
            <person name="Kurochkin I.V."/>
            <person name="Lareau L.F."/>
            <person name="Lazarevic D."/>
            <person name="Lipovich L."/>
            <person name="Liu J."/>
            <person name="Liuni S."/>
            <person name="McWilliam S."/>
            <person name="Madan Babu M."/>
            <person name="Madera M."/>
            <person name="Marchionni L."/>
            <person name="Matsuda H."/>
            <person name="Matsuzawa S."/>
            <person name="Miki H."/>
            <person name="Mignone F."/>
            <person name="Miyake S."/>
            <person name="Morris K."/>
            <person name="Mottagui-Tabar S."/>
            <person name="Mulder N."/>
            <person name="Nakano N."/>
            <person name="Nakauchi H."/>
            <person name="Ng P."/>
            <person name="Nilsson R."/>
            <person name="Nishiguchi S."/>
            <person name="Nishikawa S."/>
            <person name="Nori F."/>
            <person name="Ohara O."/>
            <person name="Okazaki Y."/>
            <person name="Orlando V."/>
            <person name="Pang K.C."/>
            <person name="Pavan W.J."/>
            <person name="Pavesi G."/>
            <person name="Pesole G."/>
            <person name="Petrovsky N."/>
            <person name="Piazza S."/>
            <person name="Reed J."/>
            <person name="Reid J.F."/>
            <person name="Ring B.Z."/>
            <person name="Ringwald M."/>
            <person name="Rost B."/>
            <person name="Ruan Y."/>
            <person name="Salzberg S.L."/>
            <person name="Sandelin A."/>
            <person name="Schneider C."/>
            <person name="Schoenbach C."/>
            <person name="Sekiguchi K."/>
            <person name="Semple C.A."/>
            <person name="Seno S."/>
            <person name="Sessa L."/>
            <person name="Sheng Y."/>
            <person name="Shibata Y."/>
            <person name="Shimada H."/>
            <person name="Shimada K."/>
            <person name="Silva D."/>
            <person name="Sinclair B."/>
            <person name="Sperling S."/>
            <person name="Stupka E."/>
            <person name="Sugiura K."/>
            <person name="Sultana R."/>
            <person name="Takenaka Y."/>
            <person name="Taki K."/>
            <person name="Tammoja K."/>
            <person name="Tan S.L."/>
            <person name="Tang S."/>
            <person name="Taylor M.S."/>
            <person name="Tegner J."/>
            <person name="Teichmann S.A."/>
            <person name="Ueda H.R."/>
            <person name="van Nimwegen E."/>
            <person name="Verardo R."/>
            <person name="Wei C.L."/>
            <person name="Yagi K."/>
            <person name="Yamanishi H."/>
            <person name="Zabarovsky E."/>
            <person name="Zhu S."/>
            <person name="Zimmer A."/>
            <person name="Hide W."/>
            <person name="Bult C."/>
            <person name="Grimmond S.M."/>
            <person name="Teasdale R.D."/>
            <person name="Liu E.T."/>
            <person name="Brusic V."/>
            <person name="Quackenbush J."/>
            <person name="Wahlestedt C."/>
            <person name="Mattick J.S."/>
            <person name="Hume D.A."/>
            <person name="Kai C."/>
            <person name="Sasaki D."/>
            <person name="Tomaru Y."/>
            <person name="Fukuda S."/>
            <person name="Kanamori-Katayama M."/>
            <person name="Suzuki M."/>
            <person name="Aoki J."/>
            <person name="Arakawa T."/>
            <person name="Iida J."/>
            <person name="Imamura K."/>
            <person name="Itoh M."/>
            <person name="Kato T."/>
            <person name="Kawaji H."/>
            <person name="Kawagashira N."/>
            <person name="Kawashima T."/>
            <person name="Kojima M."/>
            <person name="Kondo S."/>
            <person name="Konno H."/>
            <person name="Nakano K."/>
            <person name="Ninomiya N."/>
            <person name="Nishio T."/>
            <person name="Okada M."/>
            <person name="Plessy C."/>
            <person name="Shibata K."/>
            <person name="Shiraki T."/>
            <person name="Suzuki S."/>
            <person name="Tagami M."/>
            <person name="Waki K."/>
            <person name="Watahiki A."/>
            <person name="Okamura-Oho Y."/>
            <person name="Suzuki H."/>
            <person name="Kawai J."/>
            <person name="Hayashizaki Y."/>
        </authorList>
    </citation>
    <scope>NUCLEOTIDE SEQUENCE [LARGE SCALE MRNA] (ISOFORM 2)</scope>
    <source>
        <strain>C57BL/6J</strain>
        <tissue>Dendritic cell</tissue>
    </source>
</reference>
<reference key="2">
    <citation type="journal article" date="2004" name="Genome Res.">
        <title>The status, quality, and expansion of the NIH full-length cDNA project: the Mammalian Gene Collection (MGC).</title>
        <authorList>
            <consortium name="The MGC Project Team"/>
        </authorList>
    </citation>
    <scope>NUCLEOTIDE SEQUENCE [LARGE SCALE MRNA] (ISOFORM 1)</scope>
    <source>
        <strain>C57BL/6J</strain>
        <tissue>Brain</tissue>
    </source>
</reference>
<reference key="3">
    <citation type="journal article" date="2008" name="Dev. Dyn.">
        <title>Expression of TMEM16 paralogs during murine embryogenesis.</title>
        <authorList>
            <person name="Rock J.R."/>
            <person name="Harfe B.D."/>
        </authorList>
    </citation>
    <scope>DEVELOPMENTAL STAGE</scope>
</reference>
<reference key="4">
    <citation type="journal article" date="2009" name="Mol. Cell. Proteomics">
        <title>The mouse C2C12 myoblast cell surface N-linked glycoproteome: identification, glycosite occupancy, and membrane orientation.</title>
        <authorList>
            <person name="Gundry R.L."/>
            <person name="Raginski K."/>
            <person name="Tarasova Y."/>
            <person name="Tchernyshyov I."/>
            <person name="Bausch-Fluck D."/>
            <person name="Elliott S.T."/>
            <person name="Boheler K.R."/>
            <person name="Van Eyk J.E."/>
            <person name="Wollscheid B."/>
        </authorList>
    </citation>
    <scope>GLYCOSYLATION [LARGE SCALE ANALYSIS] AT ASN-494; ASN-785 AND ASN-803</scope>
    <source>
        <tissue>Myoblast</tissue>
    </source>
</reference>
<reference key="5">
    <citation type="journal article" date="2010" name="Cell">
        <title>A tissue-specific atlas of mouse protein phosphorylation and expression.</title>
        <authorList>
            <person name="Huttlin E.L."/>
            <person name="Jedrychowski M.P."/>
            <person name="Elias J.E."/>
            <person name="Goswami T."/>
            <person name="Rad R."/>
            <person name="Beausoleil S.A."/>
            <person name="Villen J."/>
            <person name="Haas W."/>
            <person name="Sowa M.E."/>
            <person name="Gygi S.P."/>
        </authorList>
    </citation>
    <scope>IDENTIFICATION BY MASS SPECTROMETRY [LARGE SCALE ANALYSIS]</scope>
    <source>
        <tissue>Brown adipose tissue</tissue>
        <tissue>Kidney</tissue>
        <tissue>Lung</tissue>
        <tissue>Pancreas</tissue>
        <tissue>Spleen</tissue>
    </source>
</reference>
<reference key="6">
    <citation type="journal article" date="2010" name="J. Biol. Chem.">
        <title>Expression and function of epithelial anoctamins.</title>
        <authorList>
            <person name="Schreiber R."/>
            <person name="Uliyakina I."/>
            <person name="Kongsuphol P."/>
            <person name="Warth R."/>
            <person name="Mirza M."/>
            <person name="Martins J.R."/>
            <person name="Kunzelmann K."/>
        </authorList>
    </citation>
    <scope>TISSUE SPECIFICITY</scope>
</reference>
<reference key="7">
    <citation type="journal article" date="2010" name="Nature">
        <title>Calcium-dependent phospholipid scrambling by TMEM16F.</title>
        <authorList>
            <person name="Suzuki J."/>
            <person name="Umeda M."/>
            <person name="Sims P.J."/>
            <person name="Nagata S."/>
        </authorList>
    </citation>
    <scope>FUNCTION</scope>
</reference>
<reference key="8">
    <citation type="journal article" date="2012" name="Am. J. Physiol.">
        <title>ANOs 3-7 in the anoctamin/Tmem16 Cl- channel family are intracellular proteins.</title>
        <authorList>
            <person name="Duran C."/>
            <person name="Qu Z."/>
            <person name="Osunkoya A.O."/>
            <person name="Cui Y."/>
            <person name="Hartzell H.C."/>
        </authorList>
    </citation>
    <scope>ABSENCE OF CALCIUM-ACTIVATED CHLORIDE CHANNEL ACTIVITY</scope>
</reference>
<reference key="9">
    <citation type="journal article" date="2012" name="Cell">
        <title>TMEM16F forms a Ca(2+)-activated cation channel required for lipid scrambling in platelets during blood coagulation.</title>
        <authorList>
            <person name="Yang H."/>
            <person name="Kim A."/>
            <person name="David T."/>
            <person name="Palmer D."/>
            <person name="Jin T."/>
            <person name="Tien J."/>
            <person name="Huang F."/>
            <person name="Cheng T."/>
            <person name="Coughlin S.R."/>
            <person name="Jan Y.N."/>
            <person name="Jan L.Y."/>
        </authorList>
    </citation>
    <scope>FUNCTION</scope>
    <scope>DISRUPTION PHENOTYPE</scope>
    <scope>ACTIVITY REGULATION</scope>
    <scope>MUTAGENESIS OF ASP-409; GLN-559 AND GLU-667</scope>
</reference>
<reference key="10">
    <citation type="journal article" date="2012" name="Exp. Physiol.">
        <title>The anoctamin (TMEM16) gene family: calcium-activated chloride channels come of age.</title>
        <authorList>
            <person name="Winpenny J.P."/>
            <person name="Gray M.A."/>
        </authorList>
    </citation>
    <scope>REVIEW</scope>
</reference>
<reference key="11">
    <citation type="journal article" date="2012" name="Exp. Physiol.">
        <title>Expression and function of epithelial anoctamins.</title>
        <authorList>
            <person name="Kunzelmann K."/>
            <person name="Schreiber R."/>
            <person name="Kmit A."/>
            <person name="Jantarajit W."/>
            <person name="Martins J.R."/>
            <person name="Faria D."/>
            <person name="Kongsuphol P."/>
            <person name="Ousingsawat J."/>
            <person name="Tian Y."/>
        </authorList>
    </citation>
    <scope>REVIEW</scope>
    <scope>FUNCTION</scope>
</reference>
<reference key="12">
    <citation type="journal article" date="2013" name="J. Biol. Chem.">
        <title>Calcium-dependent phospholipid scramblase activity of TMEM16 protein family members.</title>
        <authorList>
            <person name="Suzuki J."/>
            <person name="Fujii T."/>
            <person name="Imao T."/>
            <person name="Ishihara K."/>
            <person name="Kuba H."/>
            <person name="Nagata S."/>
        </authorList>
    </citation>
    <scope>FUNCTION</scope>
    <scope>TRANSPORTER ACTIVITY</scope>
</reference>
<reference key="13">
    <citation type="journal article" date="2013" name="J. Bone Miner. Res.">
        <title>Inactivation of Anoctamin-6/Tmem16f, a regulator of phosphatidylserine scrambling in osteoblasts, leads to decreased mineral deposition in skeletal tissues.</title>
        <authorList>
            <person name="Ehlen H.W."/>
            <person name="Chinenkova M."/>
            <person name="Moser M."/>
            <person name="Munter H.M."/>
            <person name="Krause Y."/>
            <person name="Gross S."/>
            <person name="Brachvogel B."/>
            <person name="Wuelling M."/>
            <person name="Kornak U."/>
            <person name="Vortkamp A."/>
        </authorList>
    </citation>
    <scope>FUNCTION</scope>
    <scope>DISRUPTION PHENOTYPE</scope>
    <scope>TISSUE SPECIFICITY</scope>
</reference>
<reference key="14">
    <citation type="journal article" date="2019" name="Nat. Commun.">
        <title>An inner activation gate controls TMEM16F phospholipid scrambling.</title>
        <authorList>
            <person name="Le T."/>
            <person name="Jia Z."/>
            <person name="Le S.C."/>
            <person name="Zhang Y."/>
            <person name="Chen J."/>
            <person name="Yang H."/>
        </authorList>
    </citation>
    <scope>FUNCTION</scope>
    <scope>TRANSPORTER ACTIVITY</scope>
    <scope>MUTAGENESIS OF ASP-409; PHE-518; TYR-563; ILE-612 AND ASP-703</scope>
</reference>
<reference key="15">
    <citation type="journal article" date="2024" name="Elife">
        <title>TMEM16 and OSCA/TMEM63 proteins share a conserved potential to permeate ions and phospholipids.</title>
        <authorList>
            <person name="Lowry A.J."/>
            <person name="Liang P."/>
            <person name="Song M."/>
            <person name="Wan Y."/>
            <person name="Pei Z.M."/>
            <person name="Yang H."/>
            <person name="Zhang Y."/>
        </authorList>
    </citation>
    <scope>FUNCTION</scope>
    <scope>MUTAGENESIS OF ILE-521; MET-522; THR-526 AND ILE-611</scope>
</reference>
<reference evidence="19 20 21 22" key="16">
    <citation type="journal article" date="2019" name="Elife">
        <title>Cryo-EM structures and functional characterization of the murine lipid scramblase TMEM16F.</title>
        <authorList>
            <person name="Alvadia C."/>
            <person name="Lim N.K."/>
            <person name="Clerico Mosina V."/>
            <person name="Oostergetel G.T."/>
            <person name="Dutzler R."/>
            <person name="Paulino C."/>
        </authorList>
    </citation>
    <scope>STRUCTURE BY ELECTRON MICROSCOPY (3.20 ANGSTROMS)</scope>
    <scope>FUNCTION</scope>
    <scope>SUBUNIT</scope>
    <scope>SUBCELLULAR LOCATION</scope>
    <scope>TOPOLOGY</scope>
    <scope>DISULFIDE BONDS</scope>
    <scope>MUTAGENESIS OF ARG-478; GLY-615; GLU-624 AND GLU-667</scope>
</reference>
<accession>Q6P9J9</accession>
<accession>Q8C242</accession>
<proteinExistence type="evidence at protein level"/>
<feature type="chain" id="PRO_0000191758" description="Anoctamin-6">
    <location>
        <begin position="1"/>
        <end position="911"/>
    </location>
</feature>
<feature type="topological domain" description="Cytoplasmic" evidence="11">
    <location>
        <begin position="1"/>
        <end position="301"/>
    </location>
</feature>
<feature type="transmembrane region" description="Helical" evidence="11">
    <location>
        <begin position="302"/>
        <end position="322"/>
    </location>
</feature>
<feature type="topological domain" description="Extracellular" evidence="11">
    <location>
        <begin position="323"/>
        <end position="376"/>
    </location>
</feature>
<feature type="transmembrane region" description="Helical" evidence="11">
    <location>
        <begin position="377"/>
        <end position="397"/>
    </location>
</feature>
<feature type="topological domain" description="Cytoplasmic" evidence="11">
    <location>
        <begin position="398"/>
        <end position="456"/>
    </location>
</feature>
<feature type="transmembrane region" description="Helical" evidence="11">
    <location>
        <begin position="457"/>
        <end position="477"/>
    </location>
</feature>
<feature type="topological domain" description="Extracellular" evidence="11">
    <location>
        <begin position="478"/>
        <end position="510"/>
    </location>
</feature>
<feature type="transmembrane region" description="Helical" evidence="11">
    <location>
        <begin position="511"/>
        <end position="531"/>
    </location>
</feature>
<feature type="topological domain" description="Cytoplasmic" evidence="11">
    <location>
        <begin position="532"/>
        <end position="552"/>
    </location>
</feature>
<feature type="transmembrane region" description="Helical" evidence="11">
    <location>
        <begin position="553"/>
        <end position="573"/>
    </location>
</feature>
<feature type="topological domain" description="Extracellular" evidence="11">
    <location>
        <begin position="574"/>
        <end position="602"/>
    </location>
</feature>
<feature type="transmembrane region" description="Helical" evidence="11">
    <location>
        <begin position="603"/>
        <end position="622"/>
    </location>
</feature>
<feature type="topological domain" description="Cytoplasmic" evidence="11">
    <location>
        <begin position="623"/>
        <end position="664"/>
    </location>
</feature>
<feature type="transmembrane region" description="Helical" evidence="11">
    <location>
        <begin position="665"/>
        <end position="685"/>
    </location>
</feature>
<feature type="transmembrane region" description="Helical" evidence="11">
    <location>
        <begin position="686"/>
        <end position="706"/>
    </location>
</feature>
<feature type="topological domain" description="Cytoplasmic" evidence="11">
    <location>
        <begin position="707"/>
        <end position="723"/>
    </location>
</feature>
<feature type="transmembrane region" description="Helical" evidence="11">
    <location>
        <begin position="724"/>
        <end position="744"/>
    </location>
</feature>
<feature type="topological domain" description="Extracellular" evidence="11">
    <location>
        <begin position="745"/>
        <end position="837"/>
    </location>
</feature>
<feature type="transmembrane region" description="Helical" evidence="11">
    <location>
        <begin position="838"/>
        <end position="858"/>
    </location>
</feature>
<feature type="topological domain" description="Cytoplasmic" evidence="11">
    <location>
        <begin position="859"/>
        <end position="911"/>
    </location>
</feature>
<feature type="binding site" evidence="18">
    <location>
        <position position="624"/>
    </location>
    <ligand>
        <name>Ca(2+)</name>
        <dbReference type="ChEBI" id="CHEBI:29108"/>
    </ligand>
</feature>
<feature type="binding site" evidence="18">
    <location>
        <position position="667"/>
    </location>
    <ligand>
        <name>Ca(2+)</name>
        <dbReference type="ChEBI" id="CHEBI:29108"/>
    </ligand>
</feature>
<feature type="binding site" evidence="18">
    <location>
        <position position="670"/>
    </location>
    <ligand>
        <name>Ca(2+)</name>
        <dbReference type="ChEBI" id="CHEBI:29108"/>
    </ligand>
</feature>
<feature type="glycosylation site" description="N-linked (GlcNAc...) asparagine" evidence="2">
    <location>
        <position position="330"/>
    </location>
</feature>
<feature type="glycosylation site" description="N-linked (GlcNAc...) asparagine" evidence="2">
    <location>
        <position position="362"/>
    </location>
</feature>
<feature type="glycosylation site" description="N-linked (GlcNAc...) asparagine" evidence="4">
    <location>
        <position position="494"/>
    </location>
</feature>
<feature type="glycosylation site" description="N-linked (GlcNAc...) asparagine" evidence="2">
    <location>
        <position position="778"/>
    </location>
</feature>
<feature type="glycosylation site" description="N-linked (GlcNAc...) asparagine" evidence="4">
    <location>
        <position position="785"/>
    </location>
</feature>
<feature type="glycosylation site" description="N-linked (GlcNAc...) asparagine" evidence="4">
    <location>
        <position position="803"/>
    </location>
</feature>
<feature type="disulfide bond" evidence="11 19 21">
    <location>
        <begin position="331"/>
        <end position="372"/>
    </location>
</feature>
<feature type="disulfide bond" evidence="11 19 20 21">
    <location>
        <begin position="338"/>
        <end position="365"/>
    </location>
</feature>
<feature type="disulfide bond" evidence="11 19 20 21">
    <location>
        <begin position="349"/>
        <end position="807"/>
    </location>
</feature>
<feature type="disulfide bond" evidence="11 21">
    <location>
        <begin position="352"/>
        <end position="356"/>
    </location>
</feature>
<feature type="disulfide bond" evidence="11 19 20 21">
    <location>
        <begin position="596"/>
        <end position="601"/>
    </location>
</feature>
<feature type="splice variant" id="VSP_015654" description="In isoform 2." evidence="14">
    <location>
        <begin position="1"/>
        <end position="427"/>
    </location>
</feature>
<feature type="splice variant" id="VSP_015655" description="In isoform 2." evidence="14">
    <original>NHVVINEIT</original>
    <variation>MALMAESLC</variation>
    <location>
        <begin position="428"/>
        <end position="436"/>
    </location>
</feature>
<feature type="mutagenesis site" description="No effect on lipid scramblase activity." evidence="11">
    <original>K</original>
    <variation>A</variation>
    <location>
        <position position="370"/>
    </location>
</feature>
<feature type="mutagenesis site" description="Increased speed of phospholipid scrambling." evidence="12">
    <original>D</original>
    <variation>G</variation>
    <location>
        <position position="409"/>
    </location>
</feature>
<feature type="mutagenesis site" description="Reduced channel activity and sensitivity to Ca(2+)." evidence="9">
    <original>D</original>
    <variation>G</variation>
    <location>
        <position position="409"/>
    </location>
</feature>
<feature type="mutagenesis site" description="Decreased lipid scramblase and ion channel activity. Requires lower calcium levels for activation of ion channel activity." evidence="11">
    <original>R</original>
    <variation>A</variation>
    <location>
        <position position="478"/>
    </location>
</feature>
<feature type="mutagenesis site" description="Increased speed of phospholipid scrambling. Constitutive scramblase activity at basal cytosolic calcium levels; when associated with A-563 and A-612." evidence="12">
    <original>F</original>
    <variation>A</variation>
    <location>
        <position position="518"/>
    </location>
</feature>
<feature type="mutagenesis site" description="Constitutive phospholipid scramblase activity at basal cytosolic calcium levels." evidence="12">
    <original>F</original>
    <variation>E</variation>
    <variation>K</variation>
    <variation>Q</variation>
    <location>
        <position position="518"/>
    </location>
</feature>
<feature type="mutagenesis site" description="Decreased lipid scramblase activity." evidence="12">
    <original>F</original>
    <variation>L</variation>
    <location>
        <position position="518"/>
    </location>
</feature>
<feature type="mutagenesis site" description="Slightly increased lipid scramblase activity." evidence="12">
    <original>F</original>
    <variation>W</variation>
    <location>
        <position position="518"/>
    </location>
</feature>
<feature type="mutagenesis site" description="Does not induce a constitutive phospholipid scramblase activity." evidence="13">
    <original>I</original>
    <variation>A</variation>
    <location>
        <position position="521"/>
    </location>
</feature>
<feature type="mutagenesis site" description="Induces a constitutive phospholipid scramblase activity." evidence="13">
    <original>I</original>
    <variation>K</variation>
    <variation>E</variation>
    <location>
        <position position="521"/>
    </location>
</feature>
<feature type="mutagenesis site" description="Induces a constitutive phospholipid scramblase activity." evidence="13">
    <original>M</original>
    <variation>K</variation>
    <location>
        <position position="522"/>
    </location>
</feature>
<feature type="mutagenesis site" description="Induces a constitutive phospholipid scramblase activity." evidence="13">
    <original>T</original>
    <variation>K</variation>
    <location>
        <position position="526"/>
    </location>
</feature>
<feature type="mutagenesis site" description="Moderately decreased sensitivity to activation by calcium." evidence="11">
    <original>Q</original>
    <variation>K</variation>
    <location>
        <position position="559"/>
    </location>
</feature>
<feature type="mutagenesis site" description="Slower channel activation. Increased permeability to chloride ions." evidence="9">
    <original>Q</original>
    <variation>K</variation>
    <location>
        <position position="559"/>
    </location>
</feature>
<feature type="mutagenesis site" description="Increased speed of phospholipid scrambling. Requires lower calcium levels for activation of scramblase and ion channel activity. Constitutive scramblase activity at basal cytosolic calcium levels; when associated with A-518 and A-612." evidence="12">
    <original>Y</original>
    <variation>A</variation>
    <location>
        <position position="563"/>
    </location>
</feature>
<feature type="mutagenesis site" description="Constitutive phospholipid scramblase activity at basal cytosolic calcium levels." evidence="12">
    <original>Y</original>
    <variation>K</variation>
    <variation>Q</variation>
    <location>
        <position position="563"/>
    </location>
</feature>
<feature type="mutagenesis site" description="No effect on lipid scramblase activity." evidence="11">
    <original>Y</original>
    <variation>S</variation>
    <location>
        <position position="563"/>
    </location>
</feature>
<feature type="mutagenesis site" description="Loss of lipid scramblase activity." evidence="12">
    <original>Y</original>
    <variation>W</variation>
    <location>
        <position position="563"/>
    </location>
</feature>
<feature type="mutagenesis site" description="Induces a constitutive phospholipid scramblase activity." evidence="13">
    <original>I</original>
    <variation>K</variation>
    <location>
        <position position="611"/>
    </location>
</feature>
<feature type="mutagenesis site" description="Increased speed of phospholipid scrambling. Constitutive scramblase activity at basal cytosolic calcium levels; when associated with A-518 and A-563." evidence="12">
    <original>I</original>
    <variation>A</variation>
    <location>
        <position position="612"/>
    </location>
</feature>
<feature type="mutagenesis site" description="Constitutive phospholipid scramblase activity at basal cytosolic calcium levels." evidence="12">
    <original>I</original>
    <variation>E</variation>
    <variation>K</variation>
    <location>
        <position position="612"/>
    </location>
</feature>
<feature type="mutagenesis site" description="Decreased lipid scramblase activity." evidence="12">
    <original>I</original>
    <variation>W</variation>
    <location>
        <position position="612"/>
    </location>
</feature>
<feature type="mutagenesis site" description="Requires lower calcium levels for activation of scramblase and ion channel activity." evidence="11">
    <original>G</original>
    <variation>A</variation>
    <location>
        <position position="615"/>
    </location>
</feature>
<feature type="mutagenesis site" description="No effect on lipid scramblase activity." evidence="11">
    <original>Q</original>
    <variation>F</variation>
    <location>
        <position position="623"/>
    </location>
</feature>
<feature type="mutagenesis site" description="Expected to disrupt calcium binding. Loss of scramblase and ion channel activity." evidence="11">
    <original>E</original>
    <variation>Q</variation>
    <location>
        <position position="624"/>
    </location>
</feature>
<feature type="mutagenesis site" description="Requires much higher calcium levels for the activation of scramblase and ion channel activity." evidence="9 11">
    <original>E</original>
    <variation>Q</variation>
    <location>
        <position position="667"/>
    </location>
</feature>
<feature type="mutagenesis site" description="Expected to disrupt calcium binding. Loss of scramblase activity." evidence="12">
    <original>D</original>
    <variation>R</variation>
    <location>
        <position position="703"/>
    </location>
</feature>
<feature type="strand" evidence="29">
    <location>
        <begin position="45"/>
        <end position="47"/>
    </location>
</feature>
<feature type="strand" evidence="31">
    <location>
        <begin position="58"/>
        <end position="60"/>
    </location>
</feature>
<feature type="strand" evidence="30">
    <location>
        <begin position="65"/>
        <end position="70"/>
    </location>
</feature>
<feature type="strand" evidence="30">
    <location>
        <begin position="73"/>
        <end position="77"/>
    </location>
</feature>
<feature type="helix" evidence="30">
    <location>
        <begin position="90"/>
        <end position="108"/>
    </location>
</feature>
<feature type="strand" evidence="30">
    <location>
        <begin position="111"/>
        <end position="116"/>
    </location>
</feature>
<feature type="strand" evidence="30">
    <location>
        <begin position="124"/>
        <end position="129"/>
    </location>
</feature>
<feature type="helix" evidence="30">
    <location>
        <begin position="132"/>
        <end position="141"/>
    </location>
</feature>
<feature type="strand" evidence="29">
    <location>
        <begin position="146"/>
        <end position="148"/>
    </location>
</feature>
<feature type="strand" evidence="29">
    <location>
        <begin position="188"/>
        <end position="192"/>
    </location>
</feature>
<feature type="turn" evidence="33">
    <location>
        <begin position="200"/>
        <end position="202"/>
    </location>
</feature>
<feature type="helix" evidence="30">
    <location>
        <begin position="206"/>
        <end position="219"/>
    </location>
</feature>
<feature type="strand" evidence="33">
    <location>
        <begin position="223"/>
        <end position="225"/>
    </location>
</feature>
<feature type="strand" evidence="33">
    <location>
        <begin position="228"/>
        <end position="231"/>
    </location>
</feature>
<feature type="helix" evidence="30">
    <location>
        <begin position="234"/>
        <end position="238"/>
    </location>
</feature>
<feature type="strand" evidence="30">
    <location>
        <begin position="241"/>
        <end position="246"/>
    </location>
</feature>
<feature type="strand" evidence="30">
    <location>
        <begin position="253"/>
        <end position="255"/>
    </location>
</feature>
<feature type="strand" evidence="30">
    <location>
        <begin position="258"/>
        <end position="262"/>
    </location>
</feature>
<feature type="helix" evidence="32">
    <location>
        <begin position="265"/>
        <end position="271"/>
    </location>
</feature>
<feature type="strand" evidence="32">
    <location>
        <begin position="272"/>
        <end position="276"/>
    </location>
</feature>
<feature type="helix" evidence="32">
    <location>
        <begin position="277"/>
        <end position="280"/>
    </location>
</feature>
<feature type="helix" evidence="32">
    <location>
        <begin position="285"/>
        <end position="291"/>
    </location>
</feature>
<feature type="helix" evidence="32">
    <location>
        <begin position="294"/>
        <end position="327"/>
    </location>
</feature>
<feature type="helix" evidence="32">
    <location>
        <begin position="328"/>
        <end position="330"/>
    </location>
</feature>
<feature type="helix" evidence="32">
    <location>
        <begin position="332"/>
        <end position="337"/>
    </location>
</feature>
<feature type="turn" evidence="32">
    <location>
        <begin position="340"/>
        <end position="342"/>
    </location>
</feature>
<feature type="helix" evidence="32">
    <location>
        <begin position="343"/>
        <end position="345"/>
    </location>
</feature>
<feature type="strand" evidence="30">
    <location>
        <begin position="351"/>
        <end position="356"/>
    </location>
</feature>
<feature type="helix" evidence="32">
    <location>
        <begin position="361"/>
        <end position="364"/>
    </location>
</feature>
<feature type="helix" evidence="32">
    <location>
        <begin position="365"/>
        <end position="371"/>
    </location>
</feature>
<feature type="turn" evidence="32">
    <location>
        <begin position="372"/>
        <end position="374"/>
    </location>
</feature>
<feature type="helix" evidence="32">
    <location>
        <begin position="377"/>
        <end position="408"/>
    </location>
</feature>
<feature type="turn" evidence="27">
    <location>
        <begin position="409"/>
        <end position="411"/>
    </location>
</feature>
<feature type="helix" evidence="32">
    <location>
        <begin position="421"/>
        <end position="425"/>
    </location>
</feature>
<feature type="helix" evidence="32">
    <location>
        <begin position="450"/>
        <end position="486"/>
    </location>
</feature>
<feature type="helix" evidence="32">
    <location>
        <begin position="505"/>
        <end position="538"/>
    </location>
</feature>
<feature type="helix" evidence="32">
    <location>
        <begin position="544"/>
        <end position="572"/>
    </location>
</feature>
<feature type="turn" evidence="32">
    <location>
        <begin position="573"/>
        <end position="576"/>
    </location>
</feature>
<feature type="strand" evidence="32">
    <location>
        <begin position="581"/>
        <end position="583"/>
    </location>
</feature>
<feature type="strand" evidence="30">
    <location>
        <begin position="588"/>
        <end position="590"/>
    </location>
</feature>
<feature type="helix" evidence="32">
    <location>
        <begin position="602"/>
        <end position="638"/>
    </location>
</feature>
<feature type="helix" evidence="24">
    <location>
        <begin position="639"/>
        <end position="645"/>
    </location>
</feature>
<feature type="helix" evidence="32">
    <location>
        <begin position="649"/>
        <end position="654"/>
    </location>
</feature>
<feature type="strand" evidence="28">
    <location>
        <begin position="656"/>
        <end position="658"/>
    </location>
</feature>
<feature type="turn" evidence="32">
    <location>
        <begin position="660"/>
        <end position="662"/>
    </location>
</feature>
<feature type="helix" evidence="32">
    <location>
        <begin position="665"/>
        <end position="680"/>
    </location>
</feature>
<feature type="turn" evidence="32">
    <location>
        <begin position="681"/>
        <end position="683"/>
    </location>
</feature>
<feature type="helix" evidence="32">
    <location>
        <begin position="688"/>
        <end position="708"/>
    </location>
</feature>
<feature type="strand" evidence="28">
    <location>
        <begin position="710"/>
        <end position="712"/>
    </location>
</feature>
<feature type="strand" evidence="33">
    <location>
        <begin position="720"/>
        <end position="722"/>
    </location>
</feature>
<feature type="helix" evidence="32">
    <location>
        <begin position="725"/>
        <end position="745"/>
    </location>
</feature>
<feature type="turn" evidence="26">
    <location>
        <begin position="746"/>
        <end position="748"/>
    </location>
</feature>
<feature type="helix" evidence="32">
    <location>
        <begin position="750"/>
        <end position="759"/>
    </location>
</feature>
<feature type="strand" evidence="34">
    <location>
        <begin position="760"/>
        <end position="762"/>
    </location>
</feature>
<feature type="turn" evidence="32">
    <location>
        <begin position="763"/>
        <end position="765"/>
    </location>
</feature>
<feature type="helix" evidence="30">
    <location>
        <begin position="777"/>
        <end position="780"/>
    </location>
</feature>
<feature type="strand" evidence="30">
    <location>
        <begin position="781"/>
        <end position="786"/>
    </location>
</feature>
<feature type="helix" evidence="32">
    <location>
        <begin position="797"/>
        <end position="801"/>
    </location>
</feature>
<feature type="strand" evidence="30">
    <location>
        <begin position="806"/>
        <end position="811"/>
    </location>
</feature>
<feature type="strand" evidence="25">
    <location>
        <begin position="816"/>
        <end position="818"/>
    </location>
</feature>
<feature type="turn" evidence="30">
    <location>
        <begin position="819"/>
        <end position="822"/>
    </location>
</feature>
<feature type="helix" evidence="32">
    <location>
        <begin position="826"/>
        <end position="856"/>
    </location>
</feature>
<feature type="turn" evidence="35">
    <location>
        <begin position="858"/>
        <end position="860"/>
    </location>
</feature>
<feature type="helix" evidence="30">
    <location>
        <begin position="862"/>
        <end position="869"/>
    </location>
</feature>
<feature type="strand" evidence="23">
    <location>
        <begin position="871"/>
        <end position="873"/>
    </location>
</feature>
<sequence length="911" mass="106255">MQMMTRKVLLNMELEEDDDEDGDIVLENFDQTIVCPTFGSLENQQDFRTPEFEEFNGKPDSLFFTDGQRRIDFILVYEDESKKENNKKGTNEKQKRKRQAYESNLICHGLQLEATRSVSDDKLVFVKVHAPWEVLCTYAEIMHIKLPLKPNDLKTRSPFGNLNWFTKVLRVNESVIKPEQEFFTAPFEKSRMNDFYILDRDSFFNPATRSRIVYFILSRVKYQVMNNVNKFGINRLVSSGIYKAAFPLHDCRFNYESEDISCPSERYLLYREWAHPRSIYKKQPLDLIRKYYGEKIGIYFAWLGYYTQMLLLAAVVGVACFLYGYLDQDNCTWSKEVCDPDIGGQILMCPQCDRLCPFWRLNITCESSKKLCIFDSFGTLIFAVFMGVWVTLFLEFWKRRQAELEYEWDTVELQQEEQARPEYEAQCNHVVINEITQEEERIPFTTCGKCIRVTLCASAVFFWILLIIASVIGIIVYRLSVFIVFSTTLPKNPNGTDPIQKYLTPQMATSITASIISFIIIMILNTIYEKVAIMITNFELPRTQTDYENSLTMKMFLFQFVNYYSSCFYIAFFKGKFVGYPGDPVYLLGKYRSEECDPGGCLLELTTQLTIIMGGKAIWNNIQEVLLPWVMNLIGRYKRVSGSEKITPRWEQDYHLQPMGKLGLFYEYLEMIIQFGFVTLFVASFPLAPLLALVNNILEIRVDAWKLTTQFRRMVPEKAQDIGAWQPIMQGIAILAVVTNAMIIAFTSDMIPRLVYYWSFSIPPYGDHTYYTMDGYINNTLSVFNITDFKNTDKENPYIGLGNYTLCRYRDFRNPPGHPQEYKHNIYYWHVIAAKLAFIIVMEHIIYSVKFFISYAIPDVSKITKSKIKREKYLTQKLLHESHLKDLTKNMGIIAERIGGTVDNSVRPKLE</sequence>
<comment type="function">
    <text evidence="6 7 8 9 10 11 12 13">Small-conductance calcium-activated nonselective cation (SCAN) channel which acts as a regulator of phospholipid scrambling in platelets, osteoblasts and fetal thymocytes (PubMed:21107324, PubMed:21908539, PubMed:22936354, PubMed:23021219, PubMed:23532839, PubMed:30785399, PubMed:31015464, PubMed:39495104). Phospholipid scrambling results in surface exposure of phosphatidylserine which in platelets is essential to trigger the clotting system whereas in osteoblasts is essential for the deposition of hydroxyapatite during bone mineralization (PubMed:22936354, PubMed:23021219). Has calcium-dependent phospholipid scramblase activity; scrambles phosphatidylserine, phosphatidylcholine and galactosylceramide (PubMed:23532839). Can generate outwardly rectifying chloride channel currents in airway epithelial cells and Jurkat T lymphocytes (PubMed:23021219).</text>
</comment>
<comment type="catalytic activity">
    <reaction evidence="10 12">
        <text>a 1,2-diacyl-sn-glycero-3-phospho-L-serine(in) = a 1,2-diacyl-sn-glycero-3-phospho-L-serine(out)</text>
        <dbReference type="Rhea" id="RHEA:38663"/>
        <dbReference type="ChEBI" id="CHEBI:57262"/>
    </reaction>
</comment>
<comment type="catalytic activity">
    <reaction evidence="10">
        <text>a beta-D-galactosyl-(1&lt;-&gt;1')-N-acylsphing-4-enine(out) = a beta-D-galactosyl-(1&lt;-&gt;1')-N-acylsphing-4-enine(in)</text>
        <dbReference type="Rhea" id="RHEA:38899"/>
        <dbReference type="ChEBI" id="CHEBI:18390"/>
    </reaction>
</comment>
<comment type="catalytic activity">
    <reaction evidence="10">
        <text>a 1,2-diacyl-sn-glycero-3-phosphocholine(in) = a 1,2-diacyl-sn-glycero-3-phosphocholine(out)</text>
        <dbReference type="Rhea" id="RHEA:38571"/>
        <dbReference type="ChEBI" id="CHEBI:57643"/>
    </reaction>
</comment>
<comment type="activity regulation">
    <text evidence="9">Exhibits synergistic gating by Ca(2+) and voltage. Inhibited by some non-specific cation channel blockers such as: ruthenium red, 2-aminoethyl diphenylborinate (2APB), gadolinium and cadmium ions.</text>
</comment>
<comment type="subunit">
    <text evidence="11">Homodimer.</text>
</comment>
<comment type="subcellular location">
    <subcellularLocation>
        <location evidence="11">Cell membrane</location>
        <topology evidence="11">Multi-pass membrane protein</topology>
    </subcellularLocation>
    <text evidence="1">Shows an intracellular localization.</text>
</comment>
<comment type="alternative products">
    <event type="alternative splicing"/>
    <isoform>
        <id>Q6P9J9-1</id>
        <name>1</name>
        <sequence type="displayed"/>
    </isoform>
    <isoform>
        <id>Q6P9J9-2</id>
        <name>2</name>
        <sequence type="described" ref="VSP_015654 VSP_015655"/>
    </isoform>
</comment>
<comment type="tissue specificity">
    <text evidence="5 8">Predominant expression seen in epithelial tissues. Also found in skeletal system where it is primarily expressed in osteoblasts.</text>
</comment>
<comment type="developmental stage">
    <text evidence="3">At 14.5 dpc, expressed in lung epithelium and mesenchyme. At 16.5 dpc, expressed in esophageal epithelium and mesenchyme. In the caudal digestive tract, detected in small intestine epithelium at 14.5 dpc. Also detected at 14.5 dpc in epithelium and mesenchyme of trachea, ovary, kidney and stomach. In the developing skeleton, expressed in developing rib perichondria at 14.5 dpc. Also expressed in the neural tube and dorsal root ganglia at 14.5 dpc. In developing skin, expression is restricted to basal layers of the epidermis at 16.5 dpc.</text>
</comment>
<comment type="disruption phenotype">
    <text evidence="8 9">Mice are viable and fertile, and display no major morphological defects. They exhibit deficiencies in Ca(2+)-dependent phospholipid scramblase activity in platelets and defects in blood coagulation (PubMed:23021219). They also show reduced skeleton size and skeletal deformities.</text>
</comment>
<comment type="miscellaneous">
    <text evidence="17">The term 'anoctamin' was coined because these channels are anion selective and are predicted to have eight (OCT) transmembrane segments. There is some dissatisfaction in the field with the Ano nomenclature because it is not certain that all the members of this family are anion channels or have the 8-transmembrane topology.</text>
</comment>
<comment type="similarity">
    <text evidence="17">Belongs to the anoctamin family.</text>
</comment>
<comment type="caution">
    <text evidence="11">Contains ten transmembrane regions, not eight as predicted.</text>
</comment>
<organism>
    <name type="scientific">Mus musculus</name>
    <name type="common">Mouse</name>
    <dbReference type="NCBI Taxonomy" id="10090"/>
    <lineage>
        <taxon>Eukaryota</taxon>
        <taxon>Metazoa</taxon>
        <taxon>Chordata</taxon>
        <taxon>Craniata</taxon>
        <taxon>Vertebrata</taxon>
        <taxon>Euteleostomi</taxon>
        <taxon>Mammalia</taxon>
        <taxon>Eutheria</taxon>
        <taxon>Euarchontoglires</taxon>
        <taxon>Glires</taxon>
        <taxon>Rodentia</taxon>
        <taxon>Myomorpha</taxon>
        <taxon>Muroidea</taxon>
        <taxon>Muridae</taxon>
        <taxon>Murinae</taxon>
        <taxon>Mus</taxon>
        <taxon>Mus</taxon>
    </lineage>
</organism>
<name>ANO6_MOUSE</name>
<keyword id="KW-0002">3D-structure</keyword>
<keyword id="KW-0025">Alternative splicing</keyword>
<keyword id="KW-0106">Calcium</keyword>
<keyword id="KW-1003">Cell membrane</keyword>
<keyword id="KW-0868">Chloride</keyword>
<keyword id="KW-0869">Chloride channel</keyword>
<keyword id="KW-1015">Disulfide bond</keyword>
<keyword id="KW-0325">Glycoprotein</keyword>
<keyword id="KW-0407">Ion channel</keyword>
<keyword id="KW-0406">Ion transport</keyword>
<keyword id="KW-0445">Lipid transport</keyword>
<keyword id="KW-0472">Membrane</keyword>
<keyword id="KW-0479">Metal-binding</keyword>
<keyword id="KW-1185">Reference proteome</keyword>
<keyword id="KW-0812">Transmembrane</keyword>
<keyword id="KW-1133">Transmembrane helix</keyword>
<keyword id="KW-0813">Transport</keyword>
<keyword id="KW-0851">Voltage-gated channel</keyword>
<dbReference type="EMBL" id="AK089300">
    <property type="protein sequence ID" value="BAC40833.1"/>
    <property type="molecule type" value="mRNA"/>
</dbReference>
<dbReference type="EMBL" id="BC060732">
    <property type="protein sequence ID" value="AAH60732.1"/>
    <property type="molecule type" value="mRNA"/>
</dbReference>
<dbReference type="CCDS" id="CCDS37184.1">
    <molecule id="Q6P9J9-1"/>
</dbReference>
<dbReference type="RefSeq" id="NP_001240742.1">
    <property type="nucleotide sequence ID" value="NM_001253813.1"/>
</dbReference>
<dbReference type="RefSeq" id="NP_780553.2">
    <molecule id="Q6P9J9-1"/>
    <property type="nucleotide sequence ID" value="NM_175344.4"/>
</dbReference>
<dbReference type="PDB" id="6P46">
    <property type="method" value="EM"/>
    <property type="resolution" value="3.50 A"/>
    <property type="chains" value="A/B=1-911"/>
</dbReference>
<dbReference type="PDB" id="6P47">
    <property type="method" value="EM"/>
    <property type="resolution" value="3.90 A"/>
    <property type="chains" value="A/B=1-911"/>
</dbReference>
<dbReference type="PDB" id="6P48">
    <property type="method" value="EM"/>
    <property type="resolution" value="3.20 A"/>
    <property type="chains" value="A/B=1-911"/>
</dbReference>
<dbReference type="PDB" id="6P49">
    <property type="method" value="EM"/>
    <property type="resolution" value="3.30 A"/>
    <property type="chains" value="A/B=1-911"/>
</dbReference>
<dbReference type="PDB" id="6QP6">
    <property type="method" value="EM"/>
    <property type="resolution" value="3.20 A"/>
    <property type="chains" value="A/B=1-911"/>
</dbReference>
<dbReference type="PDB" id="6QPB">
    <property type="method" value="EM"/>
    <property type="resolution" value="3.60 A"/>
    <property type="chains" value="A/B=1-911"/>
</dbReference>
<dbReference type="PDB" id="6QPC">
    <property type="method" value="EM"/>
    <property type="resolution" value="3.50 A"/>
    <property type="chains" value="A/B=1-911"/>
</dbReference>
<dbReference type="PDB" id="6QPI">
    <property type="method" value="EM"/>
    <property type="resolution" value="3.30 A"/>
    <property type="chains" value="A/B=1-911"/>
</dbReference>
<dbReference type="PDB" id="8B8G">
    <property type="method" value="EM"/>
    <property type="resolution" value="3.39 A"/>
    <property type="chains" value="A/B=1-911"/>
</dbReference>
<dbReference type="PDB" id="8B8J">
    <property type="method" value="EM"/>
    <property type="resolution" value="2.96 A"/>
    <property type="chains" value="A/B=1-911"/>
</dbReference>
<dbReference type="PDB" id="8B8K">
    <property type="method" value="EM"/>
    <property type="resolution" value="3.01 A"/>
    <property type="chains" value="A/B=1-911"/>
</dbReference>
<dbReference type="PDB" id="8B8M">
    <property type="method" value="EM"/>
    <property type="resolution" value="3.49 A"/>
    <property type="chains" value="A/B=1-911"/>
</dbReference>
<dbReference type="PDB" id="8B8Q">
    <property type="method" value="EM"/>
    <property type="resolution" value="2.94 A"/>
    <property type="chains" value="A/B=1-911"/>
</dbReference>
<dbReference type="PDB" id="8BC0">
    <property type="method" value="EM"/>
    <property type="resolution" value="3.09 A"/>
    <property type="chains" value="A/B=1-911"/>
</dbReference>
<dbReference type="PDB" id="8BC1">
    <property type="method" value="EM"/>
    <property type="resolution" value="2.93 A"/>
    <property type="chains" value="A/B=1-911"/>
</dbReference>
<dbReference type="PDB" id="8SUN">
    <property type="method" value="EM"/>
    <property type="resolution" value="3.12 A"/>
    <property type="chains" value="A/B=52-871"/>
</dbReference>
<dbReference type="PDB" id="8SUR">
    <property type="method" value="EM"/>
    <property type="resolution" value="3.10 A"/>
    <property type="chains" value="A/B=52-871"/>
</dbReference>
<dbReference type="PDB" id="8TAG">
    <property type="method" value="EM"/>
    <property type="resolution" value="3.20 A"/>
    <property type="chains" value="A/B=52-871"/>
</dbReference>
<dbReference type="PDB" id="8TAI">
    <property type="method" value="EM"/>
    <property type="resolution" value="3.10 A"/>
    <property type="chains" value="A/B=52-871"/>
</dbReference>
<dbReference type="PDB" id="8TAL">
    <property type="method" value="EM"/>
    <property type="resolution" value="3.20 A"/>
    <property type="chains" value="A/B=52-871"/>
</dbReference>
<dbReference type="PDBsum" id="6P46"/>
<dbReference type="PDBsum" id="6P47"/>
<dbReference type="PDBsum" id="6P48"/>
<dbReference type="PDBsum" id="6P49"/>
<dbReference type="PDBsum" id="6QP6"/>
<dbReference type="PDBsum" id="6QPB"/>
<dbReference type="PDBsum" id="6QPC"/>
<dbReference type="PDBsum" id="6QPI"/>
<dbReference type="PDBsum" id="8B8G"/>
<dbReference type="PDBsum" id="8B8J"/>
<dbReference type="PDBsum" id="8B8K"/>
<dbReference type="PDBsum" id="8B8M"/>
<dbReference type="PDBsum" id="8B8Q"/>
<dbReference type="PDBsum" id="8BC0"/>
<dbReference type="PDBsum" id="8BC1"/>
<dbReference type="PDBsum" id="8SUN"/>
<dbReference type="PDBsum" id="8SUR"/>
<dbReference type="PDBsum" id="8TAG"/>
<dbReference type="PDBsum" id="8TAI"/>
<dbReference type="PDBsum" id="8TAL"/>
<dbReference type="EMDB" id="EMD-15913"/>
<dbReference type="EMDB" id="EMD-15914"/>
<dbReference type="EMDB" id="EMD-15916"/>
<dbReference type="EMDB" id="EMD-15917"/>
<dbReference type="EMDB" id="EMD-15919"/>
<dbReference type="EMDB" id="EMD-15958"/>
<dbReference type="EMDB" id="EMD-15959"/>
<dbReference type="EMDB" id="EMD-20244"/>
<dbReference type="EMDB" id="EMD-20245"/>
<dbReference type="EMDB" id="EMD-20246"/>
<dbReference type="EMDB" id="EMD-20247"/>
<dbReference type="EMDB" id="EMD-40768"/>
<dbReference type="EMDB" id="EMD-40776"/>
<dbReference type="EMDB" id="EMD-41134"/>
<dbReference type="EMDB" id="EMD-41136"/>
<dbReference type="EMDB" id="EMD-41137"/>
<dbReference type="EMDB" id="EMD-4611"/>
<dbReference type="EMDB" id="EMD-4612"/>
<dbReference type="EMDB" id="EMD-4613"/>
<dbReference type="EMDB" id="EMD-4614"/>
<dbReference type="SMR" id="Q6P9J9"/>
<dbReference type="BioGRID" id="222904">
    <property type="interactions" value="1"/>
</dbReference>
<dbReference type="FunCoup" id="Q6P9J9">
    <property type="interactions" value="359"/>
</dbReference>
<dbReference type="STRING" id="10090.ENSMUSP00000071770"/>
<dbReference type="SwissLipids" id="SLP:000000373"/>
<dbReference type="MoonProt" id="Q6P9J9"/>
<dbReference type="GlyCosmos" id="Q6P9J9">
    <property type="glycosylation" value="6 sites, No reported glycans"/>
</dbReference>
<dbReference type="GlyGen" id="Q6P9J9">
    <property type="glycosylation" value="7 sites, 3 N-linked glycans (3 sites), 1 O-linked glycan (1 site)"/>
</dbReference>
<dbReference type="iPTMnet" id="Q6P9J9"/>
<dbReference type="PhosphoSitePlus" id="Q6P9J9"/>
<dbReference type="SwissPalm" id="Q6P9J9"/>
<dbReference type="jPOST" id="Q6P9J9"/>
<dbReference type="PaxDb" id="10090-ENSMUSP00000071770"/>
<dbReference type="PeptideAtlas" id="Q6P9J9"/>
<dbReference type="ProteomicsDB" id="281994">
    <molecule id="Q6P9J9-1"/>
</dbReference>
<dbReference type="ProteomicsDB" id="281995">
    <molecule id="Q6P9J9-2"/>
</dbReference>
<dbReference type="Pumba" id="Q6P9J9"/>
<dbReference type="ABCD" id="Q6P9J9">
    <property type="antibodies" value="1 sequenced antibody"/>
</dbReference>
<dbReference type="Antibodypedia" id="42608">
    <property type="antibodies" value="133 antibodies from 22 providers"/>
</dbReference>
<dbReference type="Ensembl" id="ENSMUST00000071874.8">
    <molecule id="Q6P9J9-1"/>
    <property type="protein sequence ID" value="ENSMUSP00000071770.7"/>
    <property type="gene ID" value="ENSMUSG00000064210.8"/>
</dbReference>
<dbReference type="GeneID" id="105722"/>
<dbReference type="KEGG" id="mmu:105722"/>
<dbReference type="UCSC" id="uc007xju.2">
    <molecule id="Q6P9J9-1"/>
    <property type="organism name" value="mouse"/>
</dbReference>
<dbReference type="AGR" id="MGI:2145890"/>
<dbReference type="CTD" id="196527"/>
<dbReference type="MGI" id="MGI:2145890">
    <property type="gene designation" value="Ano6"/>
</dbReference>
<dbReference type="VEuPathDB" id="HostDB:ENSMUSG00000064210"/>
<dbReference type="eggNOG" id="KOG2514">
    <property type="taxonomic scope" value="Eukaryota"/>
</dbReference>
<dbReference type="GeneTree" id="ENSGT00940000158969"/>
<dbReference type="HOGENOM" id="CLU_006685_1_3_1"/>
<dbReference type="InParanoid" id="Q6P9J9"/>
<dbReference type="OMA" id="PYAVREQ"/>
<dbReference type="OrthoDB" id="296386at2759"/>
<dbReference type="PhylomeDB" id="Q6P9J9"/>
<dbReference type="TreeFam" id="TF314265"/>
<dbReference type="Reactome" id="R-MMU-2672351">
    <property type="pathway name" value="Stimuli-sensing channels"/>
</dbReference>
<dbReference type="Reactome" id="R-MMU-6798695">
    <property type="pathway name" value="Neutrophil degranulation"/>
</dbReference>
<dbReference type="BioGRID-ORCS" id="105722">
    <property type="hits" value="3 hits in 78 CRISPR screens"/>
</dbReference>
<dbReference type="ChiTaRS" id="Ano6">
    <property type="organism name" value="mouse"/>
</dbReference>
<dbReference type="PRO" id="PR:Q6P9J9"/>
<dbReference type="Proteomes" id="UP000000589">
    <property type="component" value="Chromosome 15"/>
</dbReference>
<dbReference type="RNAct" id="Q6P9J9">
    <property type="molecule type" value="protein"/>
</dbReference>
<dbReference type="Bgee" id="ENSMUSG00000064210">
    <property type="expression patterns" value="Expressed in otolith organ and 256 other cell types or tissues"/>
</dbReference>
<dbReference type="ExpressionAtlas" id="Q6P9J9">
    <property type="expression patterns" value="baseline and differential"/>
</dbReference>
<dbReference type="GO" id="GO:0034707">
    <property type="term" value="C:chloride channel complex"/>
    <property type="evidence" value="ECO:0007669"/>
    <property type="project" value="UniProtKB-KW"/>
</dbReference>
<dbReference type="GO" id="GO:0098981">
    <property type="term" value="C:cholinergic synapse"/>
    <property type="evidence" value="ECO:0000314"/>
    <property type="project" value="SynGO"/>
</dbReference>
<dbReference type="GO" id="GO:0005886">
    <property type="term" value="C:plasma membrane"/>
    <property type="evidence" value="ECO:0000314"/>
    <property type="project" value="UniProtKB"/>
</dbReference>
<dbReference type="GO" id="GO:0097060">
    <property type="term" value="C:synaptic membrane"/>
    <property type="evidence" value="ECO:0000314"/>
    <property type="project" value="SynGO"/>
</dbReference>
<dbReference type="GO" id="GO:0005227">
    <property type="term" value="F:calcium-activated cation channel activity"/>
    <property type="evidence" value="ECO:0000314"/>
    <property type="project" value="UniProtKB"/>
</dbReference>
<dbReference type="GO" id="GO:0042802">
    <property type="term" value="F:identical protein binding"/>
    <property type="evidence" value="ECO:0000353"/>
    <property type="project" value="MGI"/>
</dbReference>
<dbReference type="GO" id="GO:0005229">
    <property type="term" value="F:intracellularly calcium-gated chloride channel activity"/>
    <property type="evidence" value="ECO:0000314"/>
    <property type="project" value="UniProtKB"/>
</dbReference>
<dbReference type="GO" id="GO:0046872">
    <property type="term" value="F:metal ion binding"/>
    <property type="evidence" value="ECO:0007669"/>
    <property type="project" value="UniProtKB-KW"/>
</dbReference>
<dbReference type="GO" id="GO:0017128">
    <property type="term" value="F:phospholipid scramblase activity"/>
    <property type="evidence" value="ECO:0000314"/>
    <property type="project" value="UniProtKB"/>
</dbReference>
<dbReference type="GO" id="GO:0042803">
    <property type="term" value="F:protein homodimerization activity"/>
    <property type="evidence" value="ECO:0000314"/>
    <property type="project" value="UniProtKB"/>
</dbReference>
<dbReference type="GO" id="GO:0005244">
    <property type="term" value="F:voltage-gated monoatomic ion channel activity"/>
    <property type="evidence" value="ECO:0000314"/>
    <property type="project" value="UniProtKB"/>
</dbReference>
<dbReference type="GO" id="GO:0032060">
    <property type="term" value="P:bleb assembly"/>
    <property type="evidence" value="ECO:0000315"/>
    <property type="project" value="UniProtKB"/>
</dbReference>
<dbReference type="GO" id="GO:0007596">
    <property type="term" value="P:blood coagulation"/>
    <property type="evidence" value="ECO:0000315"/>
    <property type="project" value="UniProtKB"/>
</dbReference>
<dbReference type="GO" id="GO:0035630">
    <property type="term" value="P:bone mineralization involved in bone maturation"/>
    <property type="evidence" value="ECO:0000315"/>
    <property type="project" value="MGI"/>
</dbReference>
<dbReference type="GO" id="GO:0061591">
    <property type="term" value="P:calcium activated galactosylceramide scrambling"/>
    <property type="evidence" value="ECO:0000314"/>
    <property type="project" value="MGI"/>
</dbReference>
<dbReference type="GO" id="GO:0061590">
    <property type="term" value="P:calcium activated phosphatidylcholine scrambling"/>
    <property type="evidence" value="ECO:0000314"/>
    <property type="project" value="MGI"/>
</dbReference>
<dbReference type="GO" id="GO:0061589">
    <property type="term" value="P:calcium activated phosphatidylserine scrambling"/>
    <property type="evidence" value="ECO:0000314"/>
    <property type="project" value="MGI"/>
</dbReference>
<dbReference type="GO" id="GO:0061588">
    <property type="term" value="P:calcium activated phospholipid scrambling"/>
    <property type="evidence" value="ECO:0000315"/>
    <property type="project" value="MGI"/>
</dbReference>
<dbReference type="GO" id="GO:0070588">
    <property type="term" value="P:calcium ion transmembrane transport"/>
    <property type="evidence" value="ECO:0000316"/>
    <property type="project" value="UniProtKB"/>
</dbReference>
<dbReference type="GO" id="GO:1902476">
    <property type="term" value="P:chloride transmembrane transport"/>
    <property type="evidence" value="ECO:0000314"/>
    <property type="project" value="UniProtKB"/>
</dbReference>
<dbReference type="GO" id="GO:0006821">
    <property type="term" value="P:chloride transport"/>
    <property type="evidence" value="ECO:0000314"/>
    <property type="project" value="MGI"/>
</dbReference>
<dbReference type="GO" id="GO:0002407">
    <property type="term" value="P:dendritic cell chemotaxis"/>
    <property type="evidence" value="ECO:0000315"/>
    <property type="project" value="MGI"/>
</dbReference>
<dbReference type="GO" id="GO:0051649">
    <property type="term" value="P:establishment of localization in cell"/>
    <property type="evidence" value="ECO:0000314"/>
    <property type="project" value="MGI"/>
</dbReference>
<dbReference type="GO" id="GO:0045794">
    <property type="term" value="P:negative regulation of cell volume"/>
    <property type="evidence" value="ECO:0000315"/>
    <property type="project" value="UniProtKB"/>
</dbReference>
<dbReference type="GO" id="GO:0045332">
    <property type="term" value="P:phospholipid translocation"/>
    <property type="evidence" value="ECO:0000314"/>
    <property type="project" value="UniProtKB"/>
</dbReference>
<dbReference type="GO" id="GO:0017121">
    <property type="term" value="P:plasma membrane phospholipid scrambling"/>
    <property type="evidence" value="ECO:0000315"/>
    <property type="project" value="UniProtKB"/>
</dbReference>
<dbReference type="GO" id="GO:0043065">
    <property type="term" value="P:positive regulation of apoptotic process"/>
    <property type="evidence" value="ECO:0000315"/>
    <property type="project" value="UniProtKB"/>
</dbReference>
<dbReference type="GO" id="GO:0030501">
    <property type="term" value="P:positive regulation of bone mineralization"/>
    <property type="evidence" value="ECO:0000315"/>
    <property type="project" value="UniProtKB"/>
</dbReference>
<dbReference type="GO" id="GO:0034767">
    <property type="term" value="P:positive regulation of monoatomic ion transmembrane transport"/>
    <property type="evidence" value="ECO:0000315"/>
    <property type="project" value="UniProtKB"/>
</dbReference>
<dbReference type="GO" id="GO:0090026">
    <property type="term" value="P:positive regulation of monocyte chemotaxis"/>
    <property type="evidence" value="ECO:0000315"/>
    <property type="project" value="UniProtKB"/>
</dbReference>
<dbReference type="GO" id="GO:0060100">
    <property type="term" value="P:positive regulation of phagocytosis, engulfment"/>
    <property type="evidence" value="ECO:0000315"/>
    <property type="project" value="UniProtKB"/>
</dbReference>
<dbReference type="GO" id="GO:1903766">
    <property type="term" value="P:positive regulation of potassium ion export across plasma membrane"/>
    <property type="evidence" value="ECO:0000250"/>
    <property type="project" value="BHF-UCL"/>
</dbReference>
<dbReference type="GO" id="GO:0035590">
    <property type="term" value="P:purinergic nucleotide receptor signaling pathway"/>
    <property type="evidence" value="ECO:0000315"/>
    <property type="project" value="UniProtKB"/>
</dbReference>
<dbReference type="GO" id="GO:0060078">
    <property type="term" value="P:regulation of postsynaptic membrane potential"/>
    <property type="evidence" value="ECO:0000314"/>
    <property type="project" value="SynGO"/>
</dbReference>
<dbReference type="InterPro" id="IPR032394">
    <property type="entry name" value="Anoct_dimer"/>
</dbReference>
<dbReference type="InterPro" id="IPR007632">
    <property type="entry name" value="Anoctamin"/>
</dbReference>
<dbReference type="InterPro" id="IPR049452">
    <property type="entry name" value="Anoctamin_TM"/>
</dbReference>
<dbReference type="PANTHER" id="PTHR12308">
    <property type="entry name" value="ANOCTAMIN"/>
    <property type="match status" value="1"/>
</dbReference>
<dbReference type="PANTHER" id="PTHR12308:SF21">
    <property type="entry name" value="ANOCTAMIN-6"/>
    <property type="match status" value="1"/>
</dbReference>
<dbReference type="Pfam" id="PF16178">
    <property type="entry name" value="Anoct_dimer"/>
    <property type="match status" value="1"/>
</dbReference>
<dbReference type="Pfam" id="PF04547">
    <property type="entry name" value="Anoctamin"/>
    <property type="match status" value="1"/>
</dbReference>
<protein>
    <recommendedName>
        <fullName>Anoctamin-6</fullName>
    </recommendedName>
    <alternativeName>
        <fullName>Small-conductance calcium-activated nonselective cation channel</fullName>
        <shortName>SCAN channel</shortName>
    </alternativeName>
    <alternativeName>
        <fullName>Transmembrane protein 16F</fullName>
    </alternativeName>
</protein>
<gene>
    <name type="primary">Ano6</name>
    <name evidence="15 16" type="synonym">Tmem16f</name>
</gene>